<sequence>MPQDQHLGVDKAKILIEALPYIQRFSGKTLVVKYGGNAMTDPELESSFARDIVLLKTVGLNPIVVHGGGPQVDSFLKQLGRESDRIDGMRVTDEATMEVVEMVLGGSVNKSIVNLINKHGGRAIGLTGQDGNLLRARKLLMEKQEEDGSIKHIDLGMVGEVTGVKTDVLEMFTQSDFIPVIAPLGVDEKGNTYNINADLVAGKVAEALGAEKLILLTNISGVLDENKNLLTGLTTQEVDRLIETGVIYGGMIPKVGCALDAVKGGVVSAHIVDGRVPHATLLEIFTDHGVGTLISNRTQTTH</sequence>
<name>ARGB_ACIB5</name>
<evidence type="ECO:0000255" key="1">
    <source>
        <dbReference type="HAMAP-Rule" id="MF_00082"/>
    </source>
</evidence>
<protein>
    <recommendedName>
        <fullName evidence="1">Acetylglutamate kinase</fullName>
        <ecNumber evidence="1">2.7.2.8</ecNumber>
    </recommendedName>
    <alternativeName>
        <fullName evidence="1">N-acetyl-L-glutamate 5-phosphotransferase</fullName>
    </alternativeName>
    <alternativeName>
        <fullName evidence="1">NAG kinase</fullName>
        <shortName evidence="1">NAGK</shortName>
    </alternativeName>
</protein>
<gene>
    <name evidence="1" type="primary">argB</name>
    <name type="ordered locus">AB57_0936</name>
</gene>
<keyword id="KW-0028">Amino-acid biosynthesis</keyword>
<keyword id="KW-0055">Arginine biosynthesis</keyword>
<keyword id="KW-0067">ATP-binding</keyword>
<keyword id="KW-0963">Cytoplasm</keyword>
<keyword id="KW-0418">Kinase</keyword>
<keyword id="KW-0547">Nucleotide-binding</keyword>
<keyword id="KW-0808">Transferase</keyword>
<accession>B7I7U4</accession>
<dbReference type="EC" id="2.7.2.8" evidence="1"/>
<dbReference type="EMBL" id="CP001182">
    <property type="protein sequence ID" value="ACJ40728.1"/>
    <property type="molecule type" value="Genomic_DNA"/>
</dbReference>
<dbReference type="RefSeq" id="WP_001135419.1">
    <property type="nucleotide sequence ID" value="NC_011586.2"/>
</dbReference>
<dbReference type="SMR" id="B7I7U4"/>
<dbReference type="GeneID" id="92892817"/>
<dbReference type="KEGG" id="abn:AB57_0936"/>
<dbReference type="HOGENOM" id="CLU_053680_0_0_6"/>
<dbReference type="UniPathway" id="UPA00068">
    <property type="reaction ID" value="UER00107"/>
</dbReference>
<dbReference type="Proteomes" id="UP000007094">
    <property type="component" value="Chromosome"/>
</dbReference>
<dbReference type="GO" id="GO:0005737">
    <property type="term" value="C:cytoplasm"/>
    <property type="evidence" value="ECO:0007669"/>
    <property type="project" value="UniProtKB-SubCell"/>
</dbReference>
<dbReference type="GO" id="GO:0003991">
    <property type="term" value="F:acetylglutamate kinase activity"/>
    <property type="evidence" value="ECO:0007669"/>
    <property type="project" value="UniProtKB-UniRule"/>
</dbReference>
<dbReference type="GO" id="GO:0005524">
    <property type="term" value="F:ATP binding"/>
    <property type="evidence" value="ECO:0007669"/>
    <property type="project" value="UniProtKB-UniRule"/>
</dbReference>
<dbReference type="GO" id="GO:0042450">
    <property type="term" value="P:arginine biosynthetic process via ornithine"/>
    <property type="evidence" value="ECO:0007669"/>
    <property type="project" value="UniProtKB-UniRule"/>
</dbReference>
<dbReference type="GO" id="GO:0006526">
    <property type="term" value="P:L-arginine biosynthetic process"/>
    <property type="evidence" value="ECO:0007669"/>
    <property type="project" value="UniProtKB-UniPathway"/>
</dbReference>
<dbReference type="CDD" id="cd04250">
    <property type="entry name" value="AAK_NAGK-C"/>
    <property type="match status" value="1"/>
</dbReference>
<dbReference type="FunFam" id="3.40.1160.10:FF:000004">
    <property type="entry name" value="Acetylglutamate kinase"/>
    <property type="match status" value="1"/>
</dbReference>
<dbReference type="Gene3D" id="3.40.1160.10">
    <property type="entry name" value="Acetylglutamate kinase-like"/>
    <property type="match status" value="1"/>
</dbReference>
<dbReference type="HAMAP" id="MF_00082">
    <property type="entry name" value="ArgB"/>
    <property type="match status" value="1"/>
</dbReference>
<dbReference type="InterPro" id="IPR036393">
    <property type="entry name" value="AceGlu_kinase-like_sf"/>
</dbReference>
<dbReference type="InterPro" id="IPR004662">
    <property type="entry name" value="AcgluKinase_fam"/>
</dbReference>
<dbReference type="InterPro" id="IPR037528">
    <property type="entry name" value="ArgB"/>
</dbReference>
<dbReference type="InterPro" id="IPR001048">
    <property type="entry name" value="Asp/Glu/Uridylate_kinase"/>
</dbReference>
<dbReference type="InterPro" id="IPR041727">
    <property type="entry name" value="NAGK-C"/>
</dbReference>
<dbReference type="NCBIfam" id="TIGR00761">
    <property type="entry name" value="argB"/>
    <property type="match status" value="1"/>
</dbReference>
<dbReference type="PANTHER" id="PTHR23342">
    <property type="entry name" value="N-ACETYLGLUTAMATE SYNTHASE"/>
    <property type="match status" value="1"/>
</dbReference>
<dbReference type="PANTHER" id="PTHR23342:SF0">
    <property type="entry name" value="N-ACETYLGLUTAMATE SYNTHASE, MITOCHONDRIAL"/>
    <property type="match status" value="1"/>
</dbReference>
<dbReference type="Pfam" id="PF00696">
    <property type="entry name" value="AA_kinase"/>
    <property type="match status" value="1"/>
</dbReference>
<dbReference type="PIRSF" id="PIRSF000728">
    <property type="entry name" value="NAGK"/>
    <property type="match status" value="1"/>
</dbReference>
<dbReference type="SUPFAM" id="SSF53633">
    <property type="entry name" value="Carbamate kinase-like"/>
    <property type="match status" value="1"/>
</dbReference>
<reference key="1">
    <citation type="journal article" date="2008" name="J. Bacteriol.">
        <title>Comparative genome sequence analysis of multidrug-resistant Acinetobacter baumannii.</title>
        <authorList>
            <person name="Adams M.D."/>
            <person name="Goglin K."/>
            <person name="Molyneaux N."/>
            <person name="Hujer K.M."/>
            <person name="Lavender H."/>
            <person name="Jamison J.J."/>
            <person name="MacDonald I.J."/>
            <person name="Martin K.M."/>
            <person name="Russo T."/>
            <person name="Campagnari A.A."/>
            <person name="Hujer A.M."/>
            <person name="Bonomo R.A."/>
            <person name="Gill S.R."/>
        </authorList>
    </citation>
    <scope>NUCLEOTIDE SEQUENCE [LARGE SCALE GENOMIC DNA]</scope>
    <source>
        <strain>AB0057</strain>
    </source>
</reference>
<organism>
    <name type="scientific">Acinetobacter baumannii (strain AB0057)</name>
    <dbReference type="NCBI Taxonomy" id="480119"/>
    <lineage>
        <taxon>Bacteria</taxon>
        <taxon>Pseudomonadati</taxon>
        <taxon>Pseudomonadota</taxon>
        <taxon>Gammaproteobacteria</taxon>
        <taxon>Moraxellales</taxon>
        <taxon>Moraxellaceae</taxon>
        <taxon>Acinetobacter</taxon>
        <taxon>Acinetobacter calcoaceticus/baumannii complex</taxon>
    </lineage>
</organism>
<feature type="chain" id="PRO_1000117113" description="Acetylglutamate kinase">
    <location>
        <begin position="1"/>
        <end position="302"/>
    </location>
</feature>
<feature type="binding site" evidence="1">
    <location>
        <begin position="68"/>
        <end position="69"/>
    </location>
    <ligand>
        <name>substrate</name>
    </ligand>
</feature>
<feature type="binding site" evidence="1">
    <location>
        <position position="90"/>
    </location>
    <ligand>
        <name>substrate</name>
    </ligand>
</feature>
<feature type="binding site" evidence="1">
    <location>
        <position position="194"/>
    </location>
    <ligand>
        <name>substrate</name>
    </ligand>
</feature>
<feature type="site" description="Transition state stabilizer" evidence="1">
    <location>
        <position position="33"/>
    </location>
</feature>
<feature type="site" description="Transition state stabilizer" evidence="1">
    <location>
        <position position="254"/>
    </location>
</feature>
<comment type="function">
    <text evidence="1">Catalyzes the ATP-dependent phosphorylation of N-acetyl-L-glutamate.</text>
</comment>
<comment type="catalytic activity">
    <reaction evidence="1">
        <text>N-acetyl-L-glutamate + ATP = N-acetyl-L-glutamyl 5-phosphate + ADP</text>
        <dbReference type="Rhea" id="RHEA:14629"/>
        <dbReference type="ChEBI" id="CHEBI:30616"/>
        <dbReference type="ChEBI" id="CHEBI:44337"/>
        <dbReference type="ChEBI" id="CHEBI:57936"/>
        <dbReference type="ChEBI" id="CHEBI:456216"/>
        <dbReference type="EC" id="2.7.2.8"/>
    </reaction>
</comment>
<comment type="pathway">
    <text evidence="1">Amino-acid biosynthesis; L-arginine biosynthesis; N(2)-acetyl-L-ornithine from L-glutamate: step 2/4.</text>
</comment>
<comment type="subcellular location">
    <subcellularLocation>
        <location evidence="1">Cytoplasm</location>
    </subcellularLocation>
</comment>
<comment type="similarity">
    <text evidence="1">Belongs to the acetylglutamate kinase family. ArgB subfamily.</text>
</comment>
<proteinExistence type="inferred from homology"/>